<accession>Q2S530</accession>
<gene>
    <name evidence="1" type="primary">murD</name>
    <name type="ordered locus">SRU_0558</name>
</gene>
<proteinExistence type="inferred from homology"/>
<sequence length="460" mass="49970">MTPDEVRRTRATVVGGARSGRAAARLLAKVGGEVFLTEQDAPSDGAAAALDEAGVEYEFGGHTAEALDADVLVLSPGVPTQSNIVQQALRAGLDVYSEIEAASWFCDAPIVAITGTNGKTTTTSLTGHVFRTAFADTLGREAIVAGNIGYPFSDYVLETEPTDVVVLEVSSFQLDHVETFRPRVSVLLNITPDHLGRYDHDFEAYAQAKHNIFRNQGEGDVVVYNRDDDDVRNAAEEAAAEQGVRPMAITREGVPAAGAGFRDGRIVLRTDDEDDSLMPQDELALRGRHNMYNSLAAAVSARVMEVENDVIRESLSGFEGVPHRLEEVHTVDDVLYVNDSKATNVNAVWYALESFDRPIVLIAGGRDKGNDYTDLKPLVRDQVRAVVALGESAEKVERELGGEAPDHSRAETMEDALTQAQRAAQPGDVVLLSPACSSFDMYENYEERGDTFRRLVETLL</sequence>
<protein>
    <recommendedName>
        <fullName evidence="1">UDP-N-acetylmuramoylalanine--D-glutamate ligase</fullName>
        <ecNumber evidence="1">6.3.2.9</ecNumber>
    </recommendedName>
    <alternativeName>
        <fullName evidence="1">D-glutamic acid-adding enzyme</fullName>
    </alternativeName>
    <alternativeName>
        <fullName evidence="1">UDP-N-acetylmuramoyl-L-alanyl-D-glutamate synthetase</fullName>
    </alternativeName>
</protein>
<keyword id="KW-0067">ATP-binding</keyword>
<keyword id="KW-0131">Cell cycle</keyword>
<keyword id="KW-0132">Cell division</keyword>
<keyword id="KW-0133">Cell shape</keyword>
<keyword id="KW-0961">Cell wall biogenesis/degradation</keyword>
<keyword id="KW-0963">Cytoplasm</keyword>
<keyword id="KW-0436">Ligase</keyword>
<keyword id="KW-0547">Nucleotide-binding</keyword>
<keyword id="KW-0573">Peptidoglycan synthesis</keyword>
<keyword id="KW-1185">Reference proteome</keyword>
<dbReference type="EC" id="6.3.2.9" evidence="1"/>
<dbReference type="EMBL" id="CP000159">
    <property type="protein sequence ID" value="ABC44279.1"/>
    <property type="molecule type" value="Genomic_DNA"/>
</dbReference>
<dbReference type="RefSeq" id="WP_011403334.1">
    <property type="nucleotide sequence ID" value="NC_007677.1"/>
</dbReference>
<dbReference type="RefSeq" id="YP_444701.1">
    <property type="nucleotide sequence ID" value="NC_007677.1"/>
</dbReference>
<dbReference type="SMR" id="Q2S530"/>
<dbReference type="STRING" id="309807.SRU_0558"/>
<dbReference type="EnsemblBacteria" id="ABC44279">
    <property type="protein sequence ID" value="ABC44279"/>
    <property type="gene ID" value="SRU_0558"/>
</dbReference>
<dbReference type="KEGG" id="sru:SRU_0558"/>
<dbReference type="PATRIC" id="fig|309807.25.peg.580"/>
<dbReference type="eggNOG" id="COG0771">
    <property type="taxonomic scope" value="Bacteria"/>
</dbReference>
<dbReference type="HOGENOM" id="CLU_032540_0_0_10"/>
<dbReference type="OrthoDB" id="9809796at2"/>
<dbReference type="UniPathway" id="UPA00219"/>
<dbReference type="Proteomes" id="UP000008674">
    <property type="component" value="Chromosome"/>
</dbReference>
<dbReference type="GO" id="GO:0005737">
    <property type="term" value="C:cytoplasm"/>
    <property type="evidence" value="ECO:0007669"/>
    <property type="project" value="UniProtKB-SubCell"/>
</dbReference>
<dbReference type="GO" id="GO:0005524">
    <property type="term" value="F:ATP binding"/>
    <property type="evidence" value="ECO:0007669"/>
    <property type="project" value="UniProtKB-UniRule"/>
</dbReference>
<dbReference type="GO" id="GO:0008764">
    <property type="term" value="F:UDP-N-acetylmuramoylalanine-D-glutamate ligase activity"/>
    <property type="evidence" value="ECO:0007669"/>
    <property type="project" value="UniProtKB-UniRule"/>
</dbReference>
<dbReference type="GO" id="GO:0051301">
    <property type="term" value="P:cell division"/>
    <property type="evidence" value="ECO:0007669"/>
    <property type="project" value="UniProtKB-KW"/>
</dbReference>
<dbReference type="GO" id="GO:0071555">
    <property type="term" value="P:cell wall organization"/>
    <property type="evidence" value="ECO:0007669"/>
    <property type="project" value="UniProtKB-KW"/>
</dbReference>
<dbReference type="GO" id="GO:0009252">
    <property type="term" value="P:peptidoglycan biosynthetic process"/>
    <property type="evidence" value="ECO:0007669"/>
    <property type="project" value="UniProtKB-UniRule"/>
</dbReference>
<dbReference type="GO" id="GO:0008360">
    <property type="term" value="P:regulation of cell shape"/>
    <property type="evidence" value="ECO:0007669"/>
    <property type="project" value="UniProtKB-KW"/>
</dbReference>
<dbReference type="Gene3D" id="3.90.190.20">
    <property type="entry name" value="Mur ligase, C-terminal domain"/>
    <property type="match status" value="1"/>
</dbReference>
<dbReference type="Gene3D" id="3.40.1190.10">
    <property type="entry name" value="Mur-like, catalytic domain"/>
    <property type="match status" value="1"/>
</dbReference>
<dbReference type="Gene3D" id="3.40.50.720">
    <property type="entry name" value="NAD(P)-binding Rossmann-like Domain"/>
    <property type="match status" value="1"/>
</dbReference>
<dbReference type="HAMAP" id="MF_00639">
    <property type="entry name" value="MurD"/>
    <property type="match status" value="1"/>
</dbReference>
<dbReference type="InterPro" id="IPR036565">
    <property type="entry name" value="Mur-like_cat_sf"/>
</dbReference>
<dbReference type="InterPro" id="IPR004101">
    <property type="entry name" value="Mur_ligase_C"/>
</dbReference>
<dbReference type="InterPro" id="IPR036615">
    <property type="entry name" value="Mur_ligase_C_dom_sf"/>
</dbReference>
<dbReference type="InterPro" id="IPR013221">
    <property type="entry name" value="Mur_ligase_cen"/>
</dbReference>
<dbReference type="InterPro" id="IPR005762">
    <property type="entry name" value="MurD"/>
</dbReference>
<dbReference type="NCBIfam" id="TIGR01087">
    <property type="entry name" value="murD"/>
    <property type="match status" value="1"/>
</dbReference>
<dbReference type="PANTHER" id="PTHR43692">
    <property type="entry name" value="UDP-N-ACETYLMURAMOYLALANINE--D-GLUTAMATE LIGASE"/>
    <property type="match status" value="1"/>
</dbReference>
<dbReference type="PANTHER" id="PTHR43692:SF1">
    <property type="entry name" value="UDP-N-ACETYLMURAMOYLALANINE--D-GLUTAMATE LIGASE"/>
    <property type="match status" value="1"/>
</dbReference>
<dbReference type="Pfam" id="PF02875">
    <property type="entry name" value="Mur_ligase_C"/>
    <property type="match status" value="1"/>
</dbReference>
<dbReference type="Pfam" id="PF08245">
    <property type="entry name" value="Mur_ligase_M"/>
    <property type="match status" value="1"/>
</dbReference>
<dbReference type="Pfam" id="PF21377">
    <property type="entry name" value="MurD_N"/>
    <property type="match status" value="1"/>
</dbReference>
<dbReference type="SUPFAM" id="SSF51984">
    <property type="entry name" value="MurCD N-terminal domain"/>
    <property type="match status" value="1"/>
</dbReference>
<dbReference type="SUPFAM" id="SSF53623">
    <property type="entry name" value="MurD-like peptide ligases, catalytic domain"/>
    <property type="match status" value="1"/>
</dbReference>
<dbReference type="SUPFAM" id="SSF53244">
    <property type="entry name" value="MurD-like peptide ligases, peptide-binding domain"/>
    <property type="match status" value="1"/>
</dbReference>
<reference key="1">
    <citation type="journal article" date="2005" name="Proc. Natl. Acad. Sci. U.S.A.">
        <title>The genome of Salinibacter ruber: convergence and gene exchange among hyperhalophilic bacteria and archaea.</title>
        <authorList>
            <person name="Mongodin E.F."/>
            <person name="Nelson K.E."/>
            <person name="Daugherty S."/>
            <person name="DeBoy R.T."/>
            <person name="Wister J."/>
            <person name="Khouri H."/>
            <person name="Weidman J."/>
            <person name="Walsh D.A."/>
            <person name="Papke R.T."/>
            <person name="Sanchez Perez G."/>
            <person name="Sharma A.K."/>
            <person name="Nesbo C.L."/>
            <person name="MacLeod D."/>
            <person name="Bapteste E."/>
            <person name="Doolittle W.F."/>
            <person name="Charlebois R.L."/>
            <person name="Legault B."/>
            <person name="Rodriguez-Valera F."/>
        </authorList>
    </citation>
    <scope>NUCLEOTIDE SEQUENCE [LARGE SCALE GENOMIC DNA]</scope>
    <source>
        <strain>DSM 13855 / CECT 5946 / M31</strain>
    </source>
</reference>
<evidence type="ECO:0000255" key="1">
    <source>
        <dbReference type="HAMAP-Rule" id="MF_00639"/>
    </source>
</evidence>
<organism>
    <name type="scientific">Salinibacter ruber (strain DSM 13855 / M31)</name>
    <dbReference type="NCBI Taxonomy" id="309807"/>
    <lineage>
        <taxon>Bacteria</taxon>
        <taxon>Pseudomonadati</taxon>
        <taxon>Rhodothermota</taxon>
        <taxon>Rhodothermia</taxon>
        <taxon>Rhodothermales</taxon>
        <taxon>Salinibacteraceae</taxon>
        <taxon>Salinibacter</taxon>
    </lineage>
</organism>
<name>MURD_SALRD</name>
<feature type="chain" id="PRO_0000257235" description="UDP-N-acetylmuramoylalanine--D-glutamate ligase">
    <location>
        <begin position="1"/>
        <end position="460"/>
    </location>
</feature>
<feature type="binding site" evidence="1">
    <location>
        <begin position="115"/>
        <end position="121"/>
    </location>
    <ligand>
        <name>ATP</name>
        <dbReference type="ChEBI" id="CHEBI:30616"/>
    </ligand>
</feature>
<comment type="function">
    <text evidence="1">Cell wall formation. Catalyzes the addition of glutamate to the nucleotide precursor UDP-N-acetylmuramoyl-L-alanine (UMA).</text>
</comment>
<comment type="catalytic activity">
    <reaction evidence="1">
        <text>UDP-N-acetyl-alpha-D-muramoyl-L-alanine + D-glutamate + ATP = UDP-N-acetyl-alpha-D-muramoyl-L-alanyl-D-glutamate + ADP + phosphate + H(+)</text>
        <dbReference type="Rhea" id="RHEA:16429"/>
        <dbReference type="ChEBI" id="CHEBI:15378"/>
        <dbReference type="ChEBI" id="CHEBI:29986"/>
        <dbReference type="ChEBI" id="CHEBI:30616"/>
        <dbReference type="ChEBI" id="CHEBI:43474"/>
        <dbReference type="ChEBI" id="CHEBI:83898"/>
        <dbReference type="ChEBI" id="CHEBI:83900"/>
        <dbReference type="ChEBI" id="CHEBI:456216"/>
        <dbReference type="EC" id="6.3.2.9"/>
    </reaction>
</comment>
<comment type="pathway">
    <text evidence="1">Cell wall biogenesis; peptidoglycan biosynthesis.</text>
</comment>
<comment type="subcellular location">
    <subcellularLocation>
        <location evidence="1">Cytoplasm</location>
    </subcellularLocation>
</comment>
<comment type="similarity">
    <text evidence="1">Belongs to the MurCDEF family.</text>
</comment>